<reference key="1">
    <citation type="journal article" date="1998" name="J. Neurosci. Res.">
        <title>Protein phosphatase type-2C isozymes present in vertebrate retinae: purification, characterization, and localization in photoreceptors.</title>
        <authorList>
            <person name="Klumpp S."/>
            <person name="Selke D."/>
            <person name="Fischer D."/>
            <person name="Baumann A."/>
            <person name="Mueller F."/>
            <person name="Thanos S."/>
        </authorList>
    </citation>
    <scope>NUCLEOTIDE SEQUENCE [MRNA] (ISOFORM BETA-2)</scope>
    <source>
        <tissue>Retina</tissue>
    </source>
</reference>
<reference key="2">
    <citation type="submission" date="2005-12" db="EMBL/GenBank/DDBJ databases">
        <authorList>
            <consortium name="NIH - Mammalian Gene Collection (MGC) project"/>
        </authorList>
    </citation>
    <scope>NUCLEOTIDE SEQUENCE [LARGE SCALE MRNA] (ISOFORM BETA-1)</scope>
    <source>
        <strain>Crossbred X Angus</strain>
        <tissue>Liver</tissue>
    </source>
</reference>
<accession>O62830</accession>
<accession>Q2T9W5</accession>
<keyword id="KW-0025">Alternative splicing</keyword>
<keyword id="KW-0963">Cytoplasm</keyword>
<keyword id="KW-0378">Hydrolase</keyword>
<keyword id="KW-1017">Isopeptide bond</keyword>
<keyword id="KW-0449">Lipoprotein</keyword>
<keyword id="KW-0460">Magnesium</keyword>
<keyword id="KW-0464">Manganese</keyword>
<keyword id="KW-0472">Membrane</keyword>
<keyword id="KW-0479">Metal-binding</keyword>
<keyword id="KW-0519">Myristate</keyword>
<keyword id="KW-0597">Phosphoprotein</keyword>
<keyword id="KW-0904">Protein phosphatase</keyword>
<keyword id="KW-1185">Reference proteome</keyword>
<keyword id="KW-0832">Ubl conjugation</keyword>
<organism>
    <name type="scientific">Bos taurus</name>
    <name type="common">Bovine</name>
    <dbReference type="NCBI Taxonomy" id="9913"/>
    <lineage>
        <taxon>Eukaryota</taxon>
        <taxon>Metazoa</taxon>
        <taxon>Chordata</taxon>
        <taxon>Craniata</taxon>
        <taxon>Vertebrata</taxon>
        <taxon>Euteleostomi</taxon>
        <taxon>Mammalia</taxon>
        <taxon>Eutheria</taxon>
        <taxon>Laurasiatheria</taxon>
        <taxon>Artiodactyla</taxon>
        <taxon>Ruminantia</taxon>
        <taxon>Pecora</taxon>
        <taxon>Bovidae</taxon>
        <taxon>Bovinae</taxon>
        <taxon>Bos</taxon>
    </lineage>
</organism>
<protein>
    <recommendedName>
        <fullName>Protein phosphatase 1B</fullName>
        <ecNumber>3.1.3.16</ecNumber>
    </recommendedName>
    <alternativeName>
        <fullName>Protein phosphatase 2C isoform beta</fullName>
        <shortName>PP2C-beta</shortName>
    </alternativeName>
</protein>
<proteinExistence type="evidence at transcript level"/>
<dbReference type="EC" id="3.1.3.16"/>
<dbReference type="EMBL" id="AJ005458">
    <property type="protein sequence ID" value="CAA06555.1"/>
    <property type="molecule type" value="mRNA"/>
</dbReference>
<dbReference type="EMBL" id="BC111235">
    <property type="protein sequence ID" value="AAI11236.1"/>
    <property type="molecule type" value="mRNA"/>
</dbReference>
<dbReference type="RefSeq" id="NP_776855.1">
    <molecule id="O62830-2"/>
    <property type="nucleotide sequence ID" value="NM_174430.3"/>
</dbReference>
<dbReference type="SMR" id="O62830"/>
<dbReference type="FunCoup" id="O62830">
    <property type="interactions" value="3009"/>
</dbReference>
<dbReference type="STRING" id="9913.ENSBTAP00000043518"/>
<dbReference type="PaxDb" id="9913-ENSBTAP00000043518"/>
<dbReference type="Ensembl" id="ENSBTAT00000046197.3">
    <molecule id="O62830-1"/>
    <property type="protein sequence ID" value="ENSBTAP00000043518.2"/>
    <property type="gene ID" value="ENSBTAG00000000223.7"/>
</dbReference>
<dbReference type="Ensembl" id="ENSBTAT00000050064.3">
    <molecule id="O62830-2"/>
    <property type="protein sequence ID" value="ENSBTAP00000046832.2"/>
    <property type="gene ID" value="ENSBTAG00000000223.7"/>
</dbReference>
<dbReference type="GeneID" id="281995"/>
<dbReference type="KEGG" id="bta:281995"/>
<dbReference type="CTD" id="5495"/>
<dbReference type="VEuPathDB" id="HostDB:ENSBTAG00000000223"/>
<dbReference type="eggNOG" id="KOG0697">
    <property type="taxonomic scope" value="Eukaryota"/>
</dbReference>
<dbReference type="GeneTree" id="ENSGT00940000156070"/>
<dbReference type="HOGENOM" id="CLU_013173_4_0_1"/>
<dbReference type="InParanoid" id="O62830"/>
<dbReference type="OMA" id="QDNRVNG"/>
<dbReference type="OrthoDB" id="10264738at2759"/>
<dbReference type="TreeFam" id="TF313590"/>
<dbReference type="Reactome" id="R-BTA-1169408">
    <property type="pathway name" value="ISG15 antiviral mechanism"/>
</dbReference>
<dbReference type="Proteomes" id="UP000009136">
    <property type="component" value="Chromosome 11"/>
</dbReference>
<dbReference type="Bgee" id="ENSBTAG00000000223">
    <property type="expression patterns" value="Expressed in semitendinosus and 106 other cell types or tissues"/>
</dbReference>
<dbReference type="GO" id="GO:0005829">
    <property type="term" value="C:cytosol"/>
    <property type="evidence" value="ECO:0000250"/>
    <property type="project" value="UniProtKB"/>
</dbReference>
<dbReference type="GO" id="GO:0016020">
    <property type="term" value="C:membrane"/>
    <property type="evidence" value="ECO:0000250"/>
    <property type="project" value="UniProtKB"/>
</dbReference>
<dbReference type="GO" id="GO:0005730">
    <property type="term" value="C:nucleolus"/>
    <property type="evidence" value="ECO:0007669"/>
    <property type="project" value="Ensembl"/>
</dbReference>
<dbReference type="GO" id="GO:0005634">
    <property type="term" value="C:nucleus"/>
    <property type="evidence" value="ECO:0000318"/>
    <property type="project" value="GO_Central"/>
</dbReference>
<dbReference type="GO" id="GO:0000287">
    <property type="term" value="F:magnesium ion binding"/>
    <property type="evidence" value="ECO:0007669"/>
    <property type="project" value="InterPro"/>
</dbReference>
<dbReference type="GO" id="GO:0030145">
    <property type="term" value="F:manganese ion binding"/>
    <property type="evidence" value="ECO:0007669"/>
    <property type="project" value="InterPro"/>
</dbReference>
<dbReference type="GO" id="GO:0004722">
    <property type="term" value="F:protein serine/threonine phosphatase activity"/>
    <property type="evidence" value="ECO:0000318"/>
    <property type="project" value="GO_Central"/>
</dbReference>
<dbReference type="GO" id="GO:0006499">
    <property type="term" value="P:N-terminal protein myristoylation"/>
    <property type="evidence" value="ECO:0000250"/>
    <property type="project" value="UniProtKB"/>
</dbReference>
<dbReference type="GO" id="GO:0043124">
    <property type="term" value="P:negative regulation of canonical NF-kappaB signal transduction"/>
    <property type="evidence" value="ECO:0000250"/>
    <property type="project" value="UniProtKB"/>
</dbReference>
<dbReference type="GO" id="GO:0050687">
    <property type="term" value="P:negative regulation of defense response to virus"/>
    <property type="evidence" value="ECO:0000250"/>
    <property type="project" value="UniProtKB"/>
</dbReference>
<dbReference type="GO" id="GO:0032688">
    <property type="term" value="P:negative regulation of interferon-beta production"/>
    <property type="evidence" value="ECO:0000250"/>
    <property type="project" value="UniProtKB"/>
</dbReference>
<dbReference type="GO" id="GO:1901223">
    <property type="term" value="P:negative regulation of non-canonical NF-kappaB signal transduction"/>
    <property type="evidence" value="ECO:0000250"/>
    <property type="project" value="UniProtKB"/>
</dbReference>
<dbReference type="GO" id="GO:0090263">
    <property type="term" value="P:positive regulation of canonical Wnt signaling pathway"/>
    <property type="evidence" value="ECO:0000318"/>
    <property type="project" value="GO_Central"/>
</dbReference>
<dbReference type="GO" id="GO:0006470">
    <property type="term" value="P:protein dephosphorylation"/>
    <property type="evidence" value="ECO:0000250"/>
    <property type="project" value="UniProtKB"/>
</dbReference>
<dbReference type="GO" id="GO:0043122">
    <property type="term" value="P:regulation of canonical NF-kappaB signal transduction"/>
    <property type="evidence" value="ECO:0000318"/>
    <property type="project" value="GO_Central"/>
</dbReference>
<dbReference type="CDD" id="cd00143">
    <property type="entry name" value="PP2Cc"/>
    <property type="match status" value="1"/>
</dbReference>
<dbReference type="FunFam" id="1.10.10.430:FF:000001">
    <property type="entry name" value="protein phosphatase 1B isoform X1"/>
    <property type="match status" value="1"/>
</dbReference>
<dbReference type="FunFam" id="3.60.40.10:FF:000001">
    <property type="entry name" value="protein phosphatase 1B isoform X1"/>
    <property type="match status" value="1"/>
</dbReference>
<dbReference type="Gene3D" id="1.10.10.430">
    <property type="entry name" value="Phosphatase 2C, C-terminal domain suprefamily"/>
    <property type="match status" value="1"/>
</dbReference>
<dbReference type="Gene3D" id="3.60.40.10">
    <property type="entry name" value="PPM-type phosphatase domain"/>
    <property type="match status" value="1"/>
</dbReference>
<dbReference type="InterPro" id="IPR015655">
    <property type="entry name" value="PP2C"/>
</dbReference>
<dbReference type="InterPro" id="IPR000222">
    <property type="entry name" value="PP2C_BS"/>
</dbReference>
<dbReference type="InterPro" id="IPR012911">
    <property type="entry name" value="PP2C_C"/>
</dbReference>
<dbReference type="InterPro" id="IPR036580">
    <property type="entry name" value="PP2C_C_sf"/>
</dbReference>
<dbReference type="InterPro" id="IPR036457">
    <property type="entry name" value="PPM-type-like_dom_sf"/>
</dbReference>
<dbReference type="InterPro" id="IPR001932">
    <property type="entry name" value="PPM-type_phosphatase-like_dom"/>
</dbReference>
<dbReference type="PANTHER" id="PTHR47992">
    <property type="entry name" value="PROTEIN PHOSPHATASE"/>
    <property type="match status" value="1"/>
</dbReference>
<dbReference type="Pfam" id="PF00481">
    <property type="entry name" value="PP2C"/>
    <property type="match status" value="1"/>
</dbReference>
<dbReference type="Pfam" id="PF07830">
    <property type="entry name" value="PP2C_C"/>
    <property type="match status" value="1"/>
</dbReference>
<dbReference type="SMART" id="SM00332">
    <property type="entry name" value="PP2Cc"/>
    <property type="match status" value="1"/>
</dbReference>
<dbReference type="SUPFAM" id="SSF81606">
    <property type="entry name" value="PP2C-like"/>
    <property type="match status" value="1"/>
</dbReference>
<dbReference type="SUPFAM" id="SSF81601">
    <property type="entry name" value="Protein serine/threonine phosphatase 2C, C-terminal domain"/>
    <property type="match status" value="1"/>
</dbReference>
<dbReference type="PROSITE" id="PS01032">
    <property type="entry name" value="PPM_1"/>
    <property type="match status" value="1"/>
</dbReference>
<dbReference type="PROSITE" id="PS51746">
    <property type="entry name" value="PPM_2"/>
    <property type="match status" value="1"/>
</dbReference>
<gene>
    <name type="primary">PPM1B</name>
</gene>
<sequence length="484" mass="53431">MGAFLDKPKTEKHNAHGAGNGLRYGLSSMQGWRVEMEDAHTAVVGIPHGLEDWSFFAVYDGHAGSRVANYCSTHLLEHITNNEDFRAAGKSGSALEPSVENVKNGIRTGFLKIDEYMRNFSDLRNGMDRSGSTAVGVMISPKHIYFINCGDSRAVLYRSGQVCFSTQDHKPCNPREKERIQNAGGSVMIQRVNGSLAVSRALGDYDYKCVDGKGPTEQLVSPEPEVYEILRAEEDEFIILACDGIWDVMSNEELCEFVKSRLEVSDDLENVCNWVVDTCLHKGSRDNMSIVLVCFSNAPKVSDEAMRKDSELDKYLESRVEEIMEKSGEEGMPDLAHVMRILSAENIPNLPPGGGLAGNIIFFRRHVIEAVYSRLNPHRESDGASDEAEESGSQGKLVEALRQMRINHRGNYRQLLEEMLTSYRLAKVEGEENPAEQAATAASSNSDAGNTVAMQESHTESKSDLAELDSCTEDAGTKMSGEKL</sequence>
<comment type="function">
    <text evidence="1">Enzyme with a broad specificity. Dephosphorylates PRKAA1 and PRKAA2. Inhibits TBK1-mediated antiviral signaling by dephosphorylating it at 'Ser-172'. Plays an important role in the termination of TNF-alpha-mediated NF-kappa-B activation through dephosphorylating and inactivating IKBKB/IKKB (By similarity).</text>
</comment>
<comment type="catalytic activity">
    <reaction>
        <text>O-phospho-L-seryl-[protein] + H2O = L-seryl-[protein] + phosphate</text>
        <dbReference type="Rhea" id="RHEA:20629"/>
        <dbReference type="Rhea" id="RHEA-COMP:9863"/>
        <dbReference type="Rhea" id="RHEA-COMP:11604"/>
        <dbReference type="ChEBI" id="CHEBI:15377"/>
        <dbReference type="ChEBI" id="CHEBI:29999"/>
        <dbReference type="ChEBI" id="CHEBI:43474"/>
        <dbReference type="ChEBI" id="CHEBI:83421"/>
        <dbReference type="EC" id="3.1.3.16"/>
    </reaction>
</comment>
<comment type="catalytic activity">
    <reaction>
        <text>O-phospho-L-threonyl-[protein] + H2O = L-threonyl-[protein] + phosphate</text>
        <dbReference type="Rhea" id="RHEA:47004"/>
        <dbReference type="Rhea" id="RHEA-COMP:11060"/>
        <dbReference type="Rhea" id="RHEA-COMP:11605"/>
        <dbReference type="ChEBI" id="CHEBI:15377"/>
        <dbReference type="ChEBI" id="CHEBI:30013"/>
        <dbReference type="ChEBI" id="CHEBI:43474"/>
        <dbReference type="ChEBI" id="CHEBI:61977"/>
        <dbReference type="EC" id="3.1.3.16"/>
    </reaction>
</comment>
<comment type="cofactor">
    <cofactor evidence="1">
        <name>Mg(2+)</name>
        <dbReference type="ChEBI" id="CHEBI:18420"/>
    </cofactor>
    <cofactor evidence="1">
        <name>Mn(2+)</name>
        <dbReference type="ChEBI" id="CHEBI:29035"/>
    </cofactor>
    <text evidence="1">Binds 2 magnesium or manganese ions per subunit.</text>
</comment>
<comment type="subunit">
    <text evidence="1">Monomer. Interacts with PAK6. Interacts with the phosphorylated form of IKBKB/IKKB.</text>
</comment>
<comment type="subcellular location">
    <subcellularLocation>
        <location evidence="3">Cytoplasm</location>
        <location evidence="3">Cytosol</location>
    </subcellularLocation>
    <subcellularLocation>
        <location evidence="3">Membrane</location>
        <topology evidence="3">Lipid-anchor</topology>
    </subcellularLocation>
    <text evidence="3">Weakly associates at the membrane and N-myristoylation mediates the membrane localization.</text>
</comment>
<comment type="alternative products">
    <event type="alternative splicing"/>
    <isoform>
        <id>O62830-1</id>
        <name>Beta-1</name>
        <sequence type="displayed"/>
    </isoform>
    <isoform>
        <id>O62830-2</id>
        <name>Beta-2</name>
        <sequence type="described" ref="VSP_020009 VSP_020010 VSP_020011"/>
    </isoform>
</comment>
<comment type="PTM">
    <text evidence="1">Isgylation negatively regulates its activity.</text>
</comment>
<comment type="PTM">
    <text evidence="1">N-myristoylation is essential for the recognition of its substrates for dephosphorylation.</text>
</comment>
<comment type="similarity">
    <text evidence="7">Belongs to the PP2C family.</text>
</comment>
<name>PPM1B_BOVIN</name>
<feature type="initiator methionine" description="Removed" evidence="2">
    <location>
        <position position="1"/>
    </location>
</feature>
<feature type="chain" id="PRO_0000057745" description="Protein phosphatase 1B">
    <location>
        <begin position="2"/>
        <end position="484"/>
    </location>
</feature>
<feature type="domain" description="PPM-type phosphatase" evidence="4">
    <location>
        <begin position="23"/>
        <end position="295"/>
    </location>
</feature>
<feature type="region of interest" description="Disordered" evidence="5">
    <location>
        <begin position="1"/>
        <end position="20"/>
    </location>
</feature>
<feature type="region of interest" description="Disordered" evidence="5">
    <location>
        <begin position="431"/>
        <end position="484"/>
    </location>
</feature>
<feature type="compositionally biased region" description="Basic and acidic residues" evidence="5">
    <location>
        <begin position="1"/>
        <end position="14"/>
    </location>
</feature>
<feature type="compositionally biased region" description="Polar residues" evidence="5">
    <location>
        <begin position="440"/>
        <end position="456"/>
    </location>
</feature>
<feature type="binding site" evidence="1">
    <location>
        <position position="60"/>
    </location>
    <ligand>
        <name>Mn(2+)</name>
        <dbReference type="ChEBI" id="CHEBI:29035"/>
        <label>1</label>
    </ligand>
</feature>
<feature type="binding site" evidence="2">
    <location>
        <position position="60"/>
    </location>
    <ligand>
        <name>Mn(2+)</name>
        <dbReference type="ChEBI" id="CHEBI:29035"/>
        <label>2</label>
    </ligand>
</feature>
<feature type="binding site" evidence="1">
    <location>
        <position position="61"/>
    </location>
    <ligand>
        <name>Mn(2+)</name>
        <dbReference type="ChEBI" id="CHEBI:29035"/>
        <label>1</label>
    </ligand>
</feature>
<feature type="binding site" evidence="2">
    <location>
        <position position="243"/>
    </location>
    <ligand>
        <name>Mn(2+)</name>
        <dbReference type="ChEBI" id="CHEBI:29035"/>
        <label>2</label>
    </ligand>
</feature>
<feature type="binding site" evidence="2">
    <location>
        <position position="286"/>
    </location>
    <ligand>
        <name>Mn(2+)</name>
        <dbReference type="ChEBI" id="CHEBI:29035"/>
        <label>2</label>
    </ligand>
</feature>
<feature type="modified residue" description="Phosphoserine" evidence="2">
    <location>
        <position position="391"/>
    </location>
</feature>
<feature type="lipid moiety-binding region" description="N-myristoyl glycine" evidence="2">
    <location>
        <position position="2"/>
    </location>
</feature>
<feature type="cross-link" description="Glycyl lysine isopeptide (Lys-Gly) (interchain with G-Cter in ISG15)" evidence="1">
    <location>
        <position position="12"/>
    </location>
</feature>
<feature type="cross-link" description="Glycyl lysine isopeptide (Lys-Gly) (interchain with G-Cter in ISG15)" evidence="1">
    <location>
        <position position="142"/>
    </location>
</feature>
<feature type="splice variant" id="VSP_020009" description="In isoform Beta-2." evidence="6">
    <original>NIIFFR</original>
    <variation>K</variation>
    <location>
        <begin position="359"/>
        <end position="364"/>
    </location>
</feature>
<feature type="splice variant" id="VSP_020010" description="In isoform Beta-2." evidence="6">
    <original>ASDEAEESG</original>
    <variation>GAGDLEDPW</variation>
    <location>
        <begin position="384"/>
        <end position="392"/>
    </location>
</feature>
<feature type="splice variant" id="VSP_020011" description="In isoform Beta-2." evidence="6">
    <location>
        <begin position="393"/>
        <end position="484"/>
    </location>
</feature>
<evidence type="ECO:0000250" key="1"/>
<evidence type="ECO:0000250" key="2">
    <source>
        <dbReference type="UniProtKB" id="O75688"/>
    </source>
</evidence>
<evidence type="ECO:0000250" key="3">
    <source>
        <dbReference type="UniProtKB" id="P36993"/>
    </source>
</evidence>
<evidence type="ECO:0000255" key="4">
    <source>
        <dbReference type="PROSITE-ProRule" id="PRU01082"/>
    </source>
</evidence>
<evidence type="ECO:0000256" key="5">
    <source>
        <dbReference type="SAM" id="MobiDB-lite"/>
    </source>
</evidence>
<evidence type="ECO:0000303" key="6">
    <source>
    </source>
</evidence>
<evidence type="ECO:0000305" key="7"/>